<feature type="chain" id="PRO_0000458474" description="Fluorinase">
    <location>
        <begin position="1"/>
        <end position="300"/>
    </location>
</feature>
<feature type="binding site" evidence="1">
    <location>
        <position position="16"/>
    </location>
    <ligand>
        <name>S-adenosyl-L-methionine</name>
        <dbReference type="ChEBI" id="CHEBI:59789"/>
    </ligand>
</feature>
<feature type="binding site" evidence="1">
    <location>
        <begin position="21"/>
        <end position="23"/>
    </location>
    <ligand>
        <name>S-adenosyl-L-methionine</name>
        <dbReference type="ChEBI" id="CHEBI:59789"/>
    </ligand>
</feature>
<feature type="binding site" evidence="1">
    <location>
        <position position="77"/>
    </location>
    <ligand>
        <name>S-adenosyl-L-methionine</name>
        <dbReference type="ChEBI" id="CHEBI:59789"/>
    </ligand>
</feature>
<feature type="binding site" evidence="1">
    <location>
        <position position="158"/>
    </location>
    <ligand>
        <name>S-adenosyl-L-methionine</name>
        <dbReference type="ChEBI" id="CHEBI:59789"/>
    </ligand>
</feature>
<feature type="binding site" evidence="1">
    <location>
        <position position="211"/>
    </location>
    <ligand>
        <name>S-adenosyl-L-methionine</name>
        <dbReference type="ChEBI" id="CHEBI:59789"/>
    </ligand>
</feature>
<feature type="binding site" evidence="1">
    <location>
        <position position="216"/>
    </location>
    <ligand>
        <name>S-adenosyl-L-methionine</name>
        <dbReference type="ChEBI" id="CHEBI:59789"/>
    </ligand>
</feature>
<feature type="binding site" evidence="1">
    <location>
        <begin position="270"/>
        <end position="271"/>
    </location>
    <ligand>
        <name>S-adenosyl-L-methionine</name>
        <dbReference type="ChEBI" id="CHEBI:59789"/>
    </ligand>
</feature>
<feature type="binding site" evidence="1">
    <location>
        <begin position="278"/>
        <end position="280"/>
    </location>
    <ligand>
        <name>S-adenosyl-L-methionine</name>
        <dbReference type="ChEBI" id="CHEBI:59789"/>
    </ligand>
</feature>
<feature type="mutagenesis site" description="Loss of fluorination activity." evidence="3">
    <original>S</original>
    <variation>A</variation>
    <location>
        <position position="158"/>
    </location>
</feature>
<name>FLA_NOCB7</name>
<dbReference type="EC" id="2.5.1.63" evidence="2 3"/>
<dbReference type="EC" id="2.5.1.94" evidence="3"/>
<dbReference type="EMBL" id="KF963271">
    <property type="protein sequence ID" value="AHK61118.1"/>
    <property type="molecule type" value="Genomic_DNA"/>
</dbReference>
<dbReference type="EMBL" id="CP003876">
    <property type="protein sequence ID" value="AFU02280.1"/>
    <property type="status" value="ALT_INIT"/>
    <property type="molecule type" value="Genomic_DNA"/>
</dbReference>
<dbReference type="RefSeq" id="WP_014985135.1">
    <property type="nucleotide sequence ID" value="NC_018681.1"/>
</dbReference>
<dbReference type="SMR" id="W8JNL4"/>
<dbReference type="STRING" id="1133849.O3I_021605"/>
<dbReference type="KEGG" id="nbr:O3I_021605"/>
<dbReference type="eggNOG" id="COG1912">
    <property type="taxonomic scope" value="Bacteria"/>
</dbReference>
<dbReference type="HOGENOM" id="CLU_059734_0_0_11"/>
<dbReference type="BRENDA" id="2.5.1.63">
    <property type="organism ID" value="10960"/>
</dbReference>
<dbReference type="Proteomes" id="UP000006304">
    <property type="component" value="Chromosome"/>
</dbReference>
<dbReference type="GO" id="GO:0033846">
    <property type="term" value="F:adenosyl-fluoride synthase activity"/>
    <property type="evidence" value="ECO:0007669"/>
    <property type="project" value="InterPro"/>
</dbReference>
<dbReference type="Gene3D" id="2.40.30.90">
    <property type="entry name" value="Bacterial fluorinating enzyme like"/>
    <property type="match status" value="1"/>
</dbReference>
<dbReference type="Gene3D" id="3.40.50.10790">
    <property type="entry name" value="S-adenosyl-l-methionine hydroxide adenosyltransferase, N-terminal"/>
    <property type="match status" value="1"/>
</dbReference>
<dbReference type="InterPro" id="IPR030978">
    <property type="entry name" value="Fluorinase"/>
</dbReference>
<dbReference type="InterPro" id="IPR046470">
    <property type="entry name" value="SAM_HAT_C"/>
</dbReference>
<dbReference type="InterPro" id="IPR046469">
    <property type="entry name" value="SAM_HAT_N"/>
</dbReference>
<dbReference type="InterPro" id="IPR002747">
    <property type="entry name" value="SAM_OH_AdoTrfase"/>
</dbReference>
<dbReference type="InterPro" id="IPR023227">
    <property type="entry name" value="SAM_OH_AdoTrfase_C_sf"/>
</dbReference>
<dbReference type="InterPro" id="IPR023228">
    <property type="entry name" value="SAM_OH_AdoTrfase_N_sf"/>
</dbReference>
<dbReference type="NCBIfam" id="TIGR04507">
    <property type="entry name" value="fluorinase"/>
    <property type="match status" value="1"/>
</dbReference>
<dbReference type="PANTHER" id="PTHR35092">
    <property type="entry name" value="CHLORINASE MJ1651"/>
    <property type="match status" value="1"/>
</dbReference>
<dbReference type="PANTHER" id="PTHR35092:SF1">
    <property type="entry name" value="CHLORINASE MJ1651"/>
    <property type="match status" value="1"/>
</dbReference>
<dbReference type="Pfam" id="PF20257">
    <property type="entry name" value="SAM_HAT_C"/>
    <property type="match status" value="1"/>
</dbReference>
<dbReference type="Pfam" id="PF01887">
    <property type="entry name" value="SAM_HAT_N"/>
    <property type="match status" value="2"/>
</dbReference>
<dbReference type="PIRSF" id="PIRSF006779">
    <property type="entry name" value="UCP006779"/>
    <property type="match status" value="1"/>
</dbReference>
<dbReference type="SUPFAM" id="SSF101852">
    <property type="entry name" value="Bacterial fluorinating enzyme, C-terminal domain"/>
    <property type="match status" value="1"/>
</dbReference>
<dbReference type="SUPFAM" id="SSF102522">
    <property type="entry name" value="Bacterial fluorinating enzyme, N-terminal domain"/>
    <property type="match status" value="1"/>
</dbReference>
<gene>
    <name evidence="4" type="primary">flA2</name>
    <name evidence="5" type="synonym">nobA</name>
    <name evidence="7" type="ORF">O3I_021605</name>
</gene>
<proteinExistence type="evidence at protein level"/>
<sequence length="300" mass="32502">MTTTNGRRPIIAFMSDLGITDDSVAQCKGLMLSVCPDVTIVDICHTMQPWDVEEGARYIVDLPRLFPEGTVFATTTYPATGTTARSVALRIAHASKGGARGQWAGSGAGFERKEGSYIYIAPNNGLLTTVIKEHGYLEAYEVSSPEVIPEQPEPTFYSREMVALPSAHLAAGFPLEKVGRRLADDEIVRFERKDPELVADHDLVGYVTNIDHPFGNVWTNIHRTDLEKLGVGYGTKLRITLDGVLPFELPLSPTFADAGEIGAAVAYLSSRGYLALARNAASLAYPYNLKAGISVQVKVG</sequence>
<accession>W8JNL4</accession>
<accession>K0EZI4</accession>
<evidence type="ECO:0000250" key="1">
    <source>
        <dbReference type="UniProtKB" id="Q70GK9"/>
    </source>
</evidence>
<evidence type="ECO:0000269" key="2">
    <source>
    </source>
</evidence>
<evidence type="ECO:0000269" key="3">
    <source>
    </source>
</evidence>
<evidence type="ECO:0000303" key="4">
    <source>
    </source>
</evidence>
<evidence type="ECO:0000303" key="5">
    <source>
    </source>
</evidence>
<evidence type="ECO:0000305" key="6"/>
<evidence type="ECO:0000312" key="7">
    <source>
        <dbReference type="EMBL" id="AFU02280.1"/>
    </source>
</evidence>
<keyword id="KW-1185">Reference proteome</keyword>
<keyword id="KW-0949">S-adenosyl-L-methionine</keyword>
<keyword id="KW-0808">Transferase</keyword>
<comment type="function">
    <text evidence="2 3">Catalyzes the formation of a C-F bond by combining S-adenosyl-L-methionine (SAM) and fluoride to generate 5'-fluoro-5'-deoxyadenosine (5'-FDA) and L-methionine (PubMed:24449539, PubMed:24795808). Probably involved in fluoroacetate (FAc) and 4-fluorothreonine (4-FT) biosynthesis (PubMed:24795808). In vitro, can also catalyze the conversion of chloride and SAM to 5'-chloro-5'-deoxyadenosine (5'-CIDA) and L-methionine in the presence of L-amino acid oxidase (PubMed:24795808).</text>
</comment>
<comment type="catalytic activity">
    <reaction evidence="2 3">
        <text>fluoride + S-adenosyl-L-methionine = 5'-deoxy-5'-fluoroadenosine + L-methionine</text>
        <dbReference type="Rhea" id="RHEA:16661"/>
        <dbReference type="ChEBI" id="CHEBI:12060"/>
        <dbReference type="ChEBI" id="CHEBI:17051"/>
        <dbReference type="ChEBI" id="CHEBI:57844"/>
        <dbReference type="ChEBI" id="CHEBI:59789"/>
        <dbReference type="EC" id="2.5.1.63"/>
    </reaction>
</comment>
<comment type="catalytic activity">
    <reaction evidence="3">
        <text>chloride + S-adenosyl-L-methionine = 5'-chloro-5'-deoxyadenosine + L-methionine</text>
        <dbReference type="Rhea" id="RHEA:28110"/>
        <dbReference type="ChEBI" id="CHEBI:17996"/>
        <dbReference type="ChEBI" id="CHEBI:47133"/>
        <dbReference type="ChEBI" id="CHEBI:57844"/>
        <dbReference type="ChEBI" id="CHEBI:59789"/>
        <dbReference type="EC" id="2.5.1.94"/>
    </reaction>
</comment>
<comment type="activity regulation">
    <text evidence="3">Activity is severely inhibited by 1 mM Cu(2+) or Zn(2+).</text>
</comment>
<comment type="biophysicochemical properties">
    <kinetics>
        <KM evidence="2">27.8 uM for S-adenosyl-L-methionine</KM>
        <text evidence="2">kcat is 0.122 min(-1).</text>
    </kinetics>
    <phDependence>
        <text evidence="3">Optimum pH is 6.5.</text>
    </phDependence>
</comment>
<comment type="subunit">
    <text evidence="3">Homohexamer.</text>
</comment>
<comment type="similarity">
    <text evidence="6">Belongs to the SAM hydrolase / SAM-dependent halogenase family.</text>
</comment>
<comment type="sequence caution" evidence="6">
    <conflict type="erroneous initiation">
        <sequence resource="EMBL-CDS" id="AFU02280"/>
    </conflict>
    <text>Truncated N-terminus.</text>
</comment>
<reference key="1">
    <citation type="journal article" date="2014" name="F1000Research">
        <title>Characterization of a SAM-dependent fluorinase from a latent biosynthetic pathway for fluoroacetate and 4-fluorothreonine formation in Nocardia brasiliensis.</title>
        <authorList>
            <person name="Wang Y."/>
            <person name="Deng Z."/>
            <person name="Qu X."/>
        </authorList>
    </citation>
    <scope>NUCLEOTIDE SEQUENCE [GENOMIC DNA]</scope>
    <scope>FUNCTION AS A FLUORINASE AND AS A CHLORINASE</scope>
    <scope>CATALYTIC ACTIVITY</scope>
    <scope>ACTIVITY REGULATION</scope>
    <scope>BIOPHYSICOCHEMICAL PROPERTIES</scope>
    <scope>SUBUNIT</scope>
    <scope>MUTAGENESIS OF SER-158</scope>
    <source>
        <strain>ATCC 700358 / HUJEG-1</strain>
    </source>
</reference>
<reference key="2">
    <citation type="journal article" date="2012" name="J. Bacteriol.">
        <title>Complete genome sequence of Nocardia brasiliensis HUJEG-1.</title>
        <authorList>
            <person name="Vera-Cabrera L."/>
            <person name="Ortiz-Lopez R."/>
            <person name="Elizondo-Gonzalez R."/>
            <person name="Perez-Maya A.A."/>
            <person name="Ocampo-Candiani J."/>
        </authorList>
    </citation>
    <scope>NUCLEOTIDE SEQUENCE [LARGE SCALE GENOMIC DNA]</scope>
    <source>
        <strain>ATCC 700358 / HUJEG-1</strain>
    </source>
</reference>
<reference key="3">
    <citation type="journal article" date="2014" name="ChemBioChem">
        <title>Identification of fluorinases from Streptomyces sp MA37, Norcardia brasiliensis, and Actinoplanes sp N902-109 by genome mining.</title>
        <authorList>
            <person name="Deng H."/>
            <person name="Ma L."/>
            <person name="Bandaranayaka N."/>
            <person name="Qin Z."/>
            <person name="Mann G."/>
            <person name="Kyeremeh K."/>
            <person name="Yu Y."/>
            <person name="Shepherd T."/>
            <person name="Naismith J.H."/>
            <person name="O'Hagan D."/>
        </authorList>
    </citation>
    <scope>FUNCTION</scope>
    <scope>CATALYTIC ACTIVITY</scope>
    <scope>BIOPHYSICOCHEMICAL PROPERTIES</scope>
    <source>
        <strain>ATCC 700358 / HUJEG-1</strain>
    </source>
</reference>
<organism>
    <name type="scientific">Nocardia brasiliensis (strain ATCC 700358 / HUJEG-1)</name>
    <dbReference type="NCBI Taxonomy" id="1133849"/>
    <lineage>
        <taxon>Bacteria</taxon>
        <taxon>Bacillati</taxon>
        <taxon>Actinomycetota</taxon>
        <taxon>Actinomycetes</taxon>
        <taxon>Mycobacteriales</taxon>
        <taxon>Nocardiaceae</taxon>
        <taxon>Nocardia</taxon>
    </lineage>
</organism>
<protein>
    <recommendedName>
        <fullName evidence="4">Fluorinase</fullName>
        <ecNumber evidence="2 3">2.5.1.63</ecNumber>
    </recommendedName>
    <alternativeName>
        <fullName evidence="6">Chlorinase</fullName>
        <ecNumber evidence="3">2.5.1.94</ecNumber>
    </alternativeName>
</protein>